<name>DTD_STRP4</name>
<feature type="chain" id="PRO_1000127580" description="D-aminoacyl-tRNA deacylase">
    <location>
        <begin position="1"/>
        <end position="147"/>
    </location>
</feature>
<feature type="short sequence motif" description="Gly-cisPro motif, important for rejection of L-amino acids" evidence="1">
    <location>
        <begin position="136"/>
        <end position="137"/>
    </location>
</feature>
<evidence type="ECO:0000255" key="1">
    <source>
        <dbReference type="HAMAP-Rule" id="MF_00518"/>
    </source>
</evidence>
<gene>
    <name evidence="1" type="primary">dtd</name>
    <name type="ordered locus">SPG_1554</name>
</gene>
<protein>
    <recommendedName>
        <fullName evidence="1">D-aminoacyl-tRNA deacylase</fullName>
        <shortName evidence="1">DTD</shortName>
        <ecNumber evidence="1">3.1.1.96</ecNumber>
    </recommendedName>
    <alternativeName>
        <fullName evidence="1">Gly-tRNA(Ala) deacylase</fullName>
    </alternativeName>
</protein>
<reference key="1">
    <citation type="journal article" date="2001" name="Microb. Drug Resist.">
        <title>Annotated draft genomic sequence from a Streptococcus pneumoniae type 19F clinical isolate.</title>
        <authorList>
            <person name="Dopazo J."/>
            <person name="Mendoza A."/>
            <person name="Herrero J."/>
            <person name="Caldara F."/>
            <person name="Humbert Y."/>
            <person name="Friedli L."/>
            <person name="Guerrier M."/>
            <person name="Grand-Schenk E."/>
            <person name="Gandin C."/>
            <person name="de Francesco M."/>
            <person name="Polissi A."/>
            <person name="Buell G."/>
            <person name="Feger G."/>
            <person name="Garcia E."/>
            <person name="Peitsch M."/>
            <person name="Garcia-Bustos J.F."/>
        </authorList>
    </citation>
    <scope>NUCLEOTIDE SEQUENCE [LARGE SCALE GENOMIC DNA]</scope>
    <source>
        <strain>G54</strain>
    </source>
</reference>
<reference key="2">
    <citation type="submission" date="2008-03" db="EMBL/GenBank/DDBJ databases">
        <title>Pneumococcal beta glucoside metabolism investigated by whole genome comparison.</title>
        <authorList>
            <person name="Mulas L."/>
            <person name="Trappetti C."/>
            <person name="Hakenbeck R."/>
            <person name="Iannelli F."/>
            <person name="Pozzi G."/>
            <person name="Davidsen T.M."/>
            <person name="Tettelin H."/>
            <person name="Oggioni M."/>
        </authorList>
    </citation>
    <scope>NUCLEOTIDE SEQUENCE [LARGE SCALE GENOMIC DNA]</scope>
    <source>
        <strain>G54</strain>
    </source>
</reference>
<dbReference type="EC" id="3.1.1.96" evidence="1"/>
<dbReference type="EMBL" id="CP001015">
    <property type="protein sequence ID" value="ACF56198.1"/>
    <property type="molecule type" value="Genomic_DNA"/>
</dbReference>
<dbReference type="SMR" id="B5E6S0"/>
<dbReference type="KEGG" id="spx:SPG_1554"/>
<dbReference type="HOGENOM" id="CLU_076901_1_0_9"/>
<dbReference type="GO" id="GO:0005737">
    <property type="term" value="C:cytoplasm"/>
    <property type="evidence" value="ECO:0007669"/>
    <property type="project" value="UniProtKB-SubCell"/>
</dbReference>
<dbReference type="GO" id="GO:0051500">
    <property type="term" value="F:D-tyrosyl-tRNA(Tyr) deacylase activity"/>
    <property type="evidence" value="ECO:0007669"/>
    <property type="project" value="TreeGrafter"/>
</dbReference>
<dbReference type="GO" id="GO:0106026">
    <property type="term" value="F:Gly-tRNA(Ala) deacylase activity"/>
    <property type="evidence" value="ECO:0007669"/>
    <property type="project" value="UniProtKB-UniRule"/>
</dbReference>
<dbReference type="GO" id="GO:0043908">
    <property type="term" value="F:Ser(Gly)-tRNA(Ala) hydrolase activity"/>
    <property type="evidence" value="ECO:0007669"/>
    <property type="project" value="UniProtKB-UniRule"/>
</dbReference>
<dbReference type="GO" id="GO:0000049">
    <property type="term" value="F:tRNA binding"/>
    <property type="evidence" value="ECO:0007669"/>
    <property type="project" value="UniProtKB-UniRule"/>
</dbReference>
<dbReference type="GO" id="GO:0019478">
    <property type="term" value="P:D-amino acid catabolic process"/>
    <property type="evidence" value="ECO:0007669"/>
    <property type="project" value="UniProtKB-UniRule"/>
</dbReference>
<dbReference type="CDD" id="cd00563">
    <property type="entry name" value="Dtyr_deacylase"/>
    <property type="match status" value="1"/>
</dbReference>
<dbReference type="FunFam" id="3.50.80.10:FF:000001">
    <property type="entry name" value="D-aminoacyl-tRNA deacylase"/>
    <property type="match status" value="1"/>
</dbReference>
<dbReference type="Gene3D" id="3.50.80.10">
    <property type="entry name" value="D-tyrosyl-tRNA(Tyr) deacylase"/>
    <property type="match status" value="1"/>
</dbReference>
<dbReference type="HAMAP" id="MF_00518">
    <property type="entry name" value="Deacylase_Dtd"/>
    <property type="match status" value="1"/>
</dbReference>
<dbReference type="InterPro" id="IPR003732">
    <property type="entry name" value="Daa-tRNA_deacyls_DTD"/>
</dbReference>
<dbReference type="InterPro" id="IPR023509">
    <property type="entry name" value="DTD-like_sf"/>
</dbReference>
<dbReference type="NCBIfam" id="TIGR00256">
    <property type="entry name" value="D-aminoacyl-tRNA deacylase"/>
    <property type="match status" value="1"/>
</dbReference>
<dbReference type="PANTHER" id="PTHR10472:SF5">
    <property type="entry name" value="D-AMINOACYL-TRNA DEACYLASE 1"/>
    <property type="match status" value="1"/>
</dbReference>
<dbReference type="PANTHER" id="PTHR10472">
    <property type="entry name" value="D-TYROSYL-TRNA TYR DEACYLASE"/>
    <property type="match status" value="1"/>
</dbReference>
<dbReference type="Pfam" id="PF02580">
    <property type="entry name" value="Tyr_Deacylase"/>
    <property type="match status" value="1"/>
</dbReference>
<dbReference type="SUPFAM" id="SSF69500">
    <property type="entry name" value="DTD-like"/>
    <property type="match status" value="1"/>
</dbReference>
<organism>
    <name type="scientific">Streptococcus pneumoniae serotype 19F (strain G54)</name>
    <dbReference type="NCBI Taxonomy" id="512566"/>
    <lineage>
        <taxon>Bacteria</taxon>
        <taxon>Bacillati</taxon>
        <taxon>Bacillota</taxon>
        <taxon>Bacilli</taxon>
        <taxon>Lactobacillales</taxon>
        <taxon>Streptococcaceae</taxon>
        <taxon>Streptococcus</taxon>
    </lineage>
</organism>
<sequence>MKIIIQRVKKAQVSIEGQIQGKINQGLLLLVGVGPEDQEEDLDYAVRKLVNMRIFSDAEGKMNLSVKDIEGEILSISQFTLFADTKKGNRPAFTGAAKPDMASDFYDAFNQKLAQEVPVQTGIFGADMQVELVNNGPVTIILDTKKR</sequence>
<comment type="function">
    <text evidence="1">An aminoacyl-tRNA editing enzyme that deacylates mischarged D-aminoacyl-tRNAs. Also deacylates mischarged glycyl-tRNA(Ala), protecting cells against glycine mischarging by AlaRS. Acts via tRNA-based rather than protein-based catalysis; rejects L-amino acids rather than detecting D-amino acids in the active site. By recycling D-aminoacyl-tRNA to D-amino acids and free tRNA molecules, this enzyme counteracts the toxicity associated with the formation of D-aminoacyl-tRNA entities in vivo and helps enforce protein L-homochirality.</text>
</comment>
<comment type="catalytic activity">
    <reaction evidence="1">
        <text>glycyl-tRNA(Ala) + H2O = tRNA(Ala) + glycine + H(+)</text>
        <dbReference type="Rhea" id="RHEA:53744"/>
        <dbReference type="Rhea" id="RHEA-COMP:9657"/>
        <dbReference type="Rhea" id="RHEA-COMP:13640"/>
        <dbReference type="ChEBI" id="CHEBI:15377"/>
        <dbReference type="ChEBI" id="CHEBI:15378"/>
        <dbReference type="ChEBI" id="CHEBI:57305"/>
        <dbReference type="ChEBI" id="CHEBI:78442"/>
        <dbReference type="ChEBI" id="CHEBI:78522"/>
        <dbReference type="EC" id="3.1.1.96"/>
    </reaction>
</comment>
<comment type="catalytic activity">
    <reaction evidence="1">
        <text>a D-aminoacyl-tRNA + H2O = a tRNA + a D-alpha-amino acid + H(+)</text>
        <dbReference type="Rhea" id="RHEA:13953"/>
        <dbReference type="Rhea" id="RHEA-COMP:10123"/>
        <dbReference type="Rhea" id="RHEA-COMP:10124"/>
        <dbReference type="ChEBI" id="CHEBI:15377"/>
        <dbReference type="ChEBI" id="CHEBI:15378"/>
        <dbReference type="ChEBI" id="CHEBI:59871"/>
        <dbReference type="ChEBI" id="CHEBI:78442"/>
        <dbReference type="ChEBI" id="CHEBI:79333"/>
        <dbReference type="EC" id="3.1.1.96"/>
    </reaction>
</comment>
<comment type="subunit">
    <text evidence="1">Homodimer.</text>
</comment>
<comment type="subcellular location">
    <subcellularLocation>
        <location evidence="1">Cytoplasm</location>
    </subcellularLocation>
</comment>
<comment type="domain">
    <text evidence="1">A Gly-cisPro motif from one monomer fits into the active site of the other monomer to allow specific chiral rejection of L-amino acids.</text>
</comment>
<comment type="similarity">
    <text evidence="1">Belongs to the DTD family.</text>
</comment>
<keyword id="KW-0963">Cytoplasm</keyword>
<keyword id="KW-0378">Hydrolase</keyword>
<keyword id="KW-0694">RNA-binding</keyword>
<keyword id="KW-0820">tRNA-binding</keyword>
<accession>B5E6S0</accession>
<proteinExistence type="inferred from homology"/>